<keyword id="KW-0963">Cytoplasm</keyword>
<keyword id="KW-0342">GTP-binding</keyword>
<keyword id="KW-0378">Hydrolase</keyword>
<keyword id="KW-0460">Magnesium</keyword>
<keyword id="KW-0479">Metal-binding</keyword>
<keyword id="KW-0547">Nucleotide-binding</keyword>
<keyword id="KW-1185">Reference proteome</keyword>
<accession>Q039J3</accession>
<sequence>MFVDQVQVEVQAGKGGDGMVAFRREKFVPFGGPAGGDGGHGGSIILYVDEGLRTLMDFRYQRHFKASAGGNGQGKQMYGRAAEDRRIAVPAGTTVTDADTGEVLGDLTEPGQTLVVAKGGRGGRGNMHFVSPKNTAPEISENGEPGEHRFIKLELKVLADVGLVGFPSVGKSTLLSVVTQAKPKIAAYQFTTLVPNLGMVQLDDGTDFVMADLPGLIEGASQGVGLGIQFLRHVERTRVLLHLVEMDPDNGREPLDDYDQIRKELGAYDDNILKRPELVVATKMDLPGAAERFADFKAALLARGVAADHIFEISSLTHRGVTPLMHKTAEVLKTAPHFEPKQAAVKTADYKYQPEPALKVTRDSDGTFVLTGDKIERAFKMANLDHEDGAMRFARQLRSMGVDDALRDAGAESGDLVAIDDFTFEFVE</sequence>
<gene>
    <name evidence="1" type="primary">obg</name>
    <name type="ordered locus">LSEI_1350</name>
</gene>
<feature type="chain" id="PRO_0000385991" description="GTPase Obg">
    <location>
        <begin position="1"/>
        <end position="428"/>
    </location>
</feature>
<feature type="domain" description="Obg" evidence="3">
    <location>
        <begin position="1"/>
        <end position="158"/>
    </location>
</feature>
<feature type="domain" description="OBG-type G" evidence="1">
    <location>
        <begin position="159"/>
        <end position="333"/>
    </location>
</feature>
<feature type="domain" description="OCT" evidence="2">
    <location>
        <begin position="350"/>
        <end position="428"/>
    </location>
</feature>
<feature type="binding site" evidence="1">
    <location>
        <begin position="165"/>
        <end position="172"/>
    </location>
    <ligand>
        <name>GTP</name>
        <dbReference type="ChEBI" id="CHEBI:37565"/>
    </ligand>
</feature>
<feature type="binding site" evidence="1">
    <location>
        <position position="172"/>
    </location>
    <ligand>
        <name>Mg(2+)</name>
        <dbReference type="ChEBI" id="CHEBI:18420"/>
    </ligand>
</feature>
<feature type="binding site" evidence="1">
    <location>
        <begin position="190"/>
        <end position="194"/>
    </location>
    <ligand>
        <name>GTP</name>
        <dbReference type="ChEBI" id="CHEBI:37565"/>
    </ligand>
</feature>
<feature type="binding site" evidence="1">
    <location>
        <position position="192"/>
    </location>
    <ligand>
        <name>Mg(2+)</name>
        <dbReference type="ChEBI" id="CHEBI:18420"/>
    </ligand>
</feature>
<feature type="binding site" evidence="1">
    <location>
        <begin position="212"/>
        <end position="215"/>
    </location>
    <ligand>
        <name>GTP</name>
        <dbReference type="ChEBI" id="CHEBI:37565"/>
    </ligand>
</feature>
<feature type="binding site" evidence="1">
    <location>
        <begin position="282"/>
        <end position="285"/>
    </location>
    <ligand>
        <name>GTP</name>
        <dbReference type="ChEBI" id="CHEBI:37565"/>
    </ligand>
</feature>
<feature type="binding site" evidence="1">
    <location>
        <begin position="314"/>
        <end position="316"/>
    </location>
    <ligand>
        <name>GTP</name>
        <dbReference type="ChEBI" id="CHEBI:37565"/>
    </ligand>
</feature>
<proteinExistence type="inferred from homology"/>
<reference key="1">
    <citation type="journal article" date="2006" name="Proc. Natl. Acad. Sci. U.S.A.">
        <title>Comparative genomics of the lactic acid bacteria.</title>
        <authorList>
            <person name="Makarova K.S."/>
            <person name="Slesarev A."/>
            <person name="Wolf Y.I."/>
            <person name="Sorokin A."/>
            <person name="Mirkin B."/>
            <person name="Koonin E.V."/>
            <person name="Pavlov A."/>
            <person name="Pavlova N."/>
            <person name="Karamychev V."/>
            <person name="Polouchine N."/>
            <person name="Shakhova V."/>
            <person name="Grigoriev I."/>
            <person name="Lou Y."/>
            <person name="Rohksar D."/>
            <person name="Lucas S."/>
            <person name="Huang K."/>
            <person name="Goodstein D.M."/>
            <person name="Hawkins T."/>
            <person name="Plengvidhya V."/>
            <person name="Welker D."/>
            <person name="Hughes J."/>
            <person name="Goh Y."/>
            <person name="Benson A."/>
            <person name="Baldwin K."/>
            <person name="Lee J.-H."/>
            <person name="Diaz-Muniz I."/>
            <person name="Dosti B."/>
            <person name="Smeianov V."/>
            <person name="Wechter W."/>
            <person name="Barabote R."/>
            <person name="Lorca G."/>
            <person name="Altermann E."/>
            <person name="Barrangou R."/>
            <person name="Ganesan B."/>
            <person name="Xie Y."/>
            <person name="Rawsthorne H."/>
            <person name="Tamir D."/>
            <person name="Parker C."/>
            <person name="Breidt F."/>
            <person name="Broadbent J.R."/>
            <person name="Hutkins R."/>
            <person name="O'Sullivan D."/>
            <person name="Steele J."/>
            <person name="Unlu G."/>
            <person name="Saier M.H. Jr."/>
            <person name="Klaenhammer T."/>
            <person name="Richardson P."/>
            <person name="Kozyavkin S."/>
            <person name="Weimer B.C."/>
            <person name="Mills D.A."/>
        </authorList>
    </citation>
    <scope>NUCLEOTIDE SEQUENCE [LARGE SCALE GENOMIC DNA]</scope>
    <source>
        <strain>ATCC 334 / BCRC 17002 / CCUG 31169 / CIP 107868 / KCTC 3260 / NRRL B-441</strain>
    </source>
</reference>
<evidence type="ECO:0000255" key="1">
    <source>
        <dbReference type="HAMAP-Rule" id="MF_01454"/>
    </source>
</evidence>
<evidence type="ECO:0000255" key="2">
    <source>
        <dbReference type="PROSITE-ProRule" id="PRU01229"/>
    </source>
</evidence>
<evidence type="ECO:0000255" key="3">
    <source>
        <dbReference type="PROSITE-ProRule" id="PRU01231"/>
    </source>
</evidence>
<protein>
    <recommendedName>
        <fullName evidence="1">GTPase Obg</fullName>
        <ecNumber evidence="1">3.6.5.-</ecNumber>
    </recommendedName>
    <alternativeName>
        <fullName evidence="1">GTP-binding protein Obg</fullName>
    </alternativeName>
</protein>
<organism>
    <name type="scientific">Lacticaseibacillus paracasei (strain ATCC 334 / BCRC 17002 / CCUG 31169 / CIP 107868 / KCTC 3260 / NRRL B-441)</name>
    <name type="common">Lactobacillus paracasei</name>
    <dbReference type="NCBI Taxonomy" id="321967"/>
    <lineage>
        <taxon>Bacteria</taxon>
        <taxon>Bacillati</taxon>
        <taxon>Bacillota</taxon>
        <taxon>Bacilli</taxon>
        <taxon>Lactobacillales</taxon>
        <taxon>Lactobacillaceae</taxon>
        <taxon>Lacticaseibacillus</taxon>
    </lineage>
</organism>
<comment type="function">
    <text evidence="1">An essential GTPase which binds GTP, GDP and possibly (p)ppGpp with moderate affinity, with high nucleotide exchange rates and a fairly low GTP hydrolysis rate. Plays a role in control of the cell cycle, stress response, ribosome biogenesis and in those bacteria that undergo differentiation, in morphogenesis control.</text>
</comment>
<comment type="cofactor">
    <cofactor evidence="1">
        <name>Mg(2+)</name>
        <dbReference type="ChEBI" id="CHEBI:18420"/>
    </cofactor>
</comment>
<comment type="subunit">
    <text evidence="1">Monomer.</text>
</comment>
<comment type="subcellular location">
    <subcellularLocation>
        <location evidence="1">Cytoplasm</location>
    </subcellularLocation>
</comment>
<comment type="similarity">
    <text evidence="1">Belongs to the TRAFAC class OBG-HflX-like GTPase superfamily. OBG GTPase family.</text>
</comment>
<dbReference type="EC" id="3.6.5.-" evidence="1"/>
<dbReference type="EMBL" id="CP000423">
    <property type="protein sequence ID" value="ABJ70129.1"/>
    <property type="molecule type" value="Genomic_DNA"/>
</dbReference>
<dbReference type="RefSeq" id="YP_806571.1">
    <property type="nucleotide sequence ID" value="NC_008526.1"/>
</dbReference>
<dbReference type="SMR" id="Q039J3"/>
<dbReference type="STRING" id="321967.LSEI_1350"/>
<dbReference type="PaxDb" id="321967-LSEI_1350"/>
<dbReference type="KEGG" id="lca:LSEI_1350"/>
<dbReference type="PATRIC" id="fig|321967.11.peg.1329"/>
<dbReference type="HOGENOM" id="CLU_011747_2_1_9"/>
<dbReference type="Proteomes" id="UP000001651">
    <property type="component" value="Chromosome"/>
</dbReference>
<dbReference type="GO" id="GO:0005737">
    <property type="term" value="C:cytoplasm"/>
    <property type="evidence" value="ECO:0007669"/>
    <property type="project" value="UniProtKB-SubCell"/>
</dbReference>
<dbReference type="GO" id="GO:0005525">
    <property type="term" value="F:GTP binding"/>
    <property type="evidence" value="ECO:0007669"/>
    <property type="project" value="UniProtKB-UniRule"/>
</dbReference>
<dbReference type="GO" id="GO:0003924">
    <property type="term" value="F:GTPase activity"/>
    <property type="evidence" value="ECO:0007669"/>
    <property type="project" value="UniProtKB-UniRule"/>
</dbReference>
<dbReference type="GO" id="GO:0000287">
    <property type="term" value="F:magnesium ion binding"/>
    <property type="evidence" value="ECO:0007669"/>
    <property type="project" value="InterPro"/>
</dbReference>
<dbReference type="GO" id="GO:0042254">
    <property type="term" value="P:ribosome biogenesis"/>
    <property type="evidence" value="ECO:0007669"/>
    <property type="project" value="UniProtKB-UniRule"/>
</dbReference>
<dbReference type="CDD" id="cd01898">
    <property type="entry name" value="Obg"/>
    <property type="match status" value="1"/>
</dbReference>
<dbReference type="FunFam" id="2.70.210.12:FF:000001">
    <property type="entry name" value="GTPase Obg"/>
    <property type="match status" value="1"/>
</dbReference>
<dbReference type="Gene3D" id="3.30.300.350">
    <property type="entry name" value="GTP-binding protein OBG, C-terminal domain"/>
    <property type="match status" value="1"/>
</dbReference>
<dbReference type="Gene3D" id="2.70.210.12">
    <property type="entry name" value="GTP1/OBG domain"/>
    <property type="match status" value="1"/>
</dbReference>
<dbReference type="Gene3D" id="3.40.50.300">
    <property type="entry name" value="P-loop containing nucleotide triphosphate hydrolases"/>
    <property type="match status" value="1"/>
</dbReference>
<dbReference type="HAMAP" id="MF_01454">
    <property type="entry name" value="GTPase_Obg"/>
    <property type="match status" value="1"/>
</dbReference>
<dbReference type="InterPro" id="IPR031167">
    <property type="entry name" value="G_OBG"/>
</dbReference>
<dbReference type="InterPro" id="IPR006073">
    <property type="entry name" value="GTP-bd"/>
</dbReference>
<dbReference type="InterPro" id="IPR014100">
    <property type="entry name" value="GTP-bd_Obg/CgtA"/>
</dbReference>
<dbReference type="InterPro" id="IPR036346">
    <property type="entry name" value="GTP-bd_prot_GTP1/OBG_C_sf"/>
</dbReference>
<dbReference type="InterPro" id="IPR006074">
    <property type="entry name" value="GTP1-OBG_CS"/>
</dbReference>
<dbReference type="InterPro" id="IPR006169">
    <property type="entry name" value="GTP1_OBG_dom"/>
</dbReference>
<dbReference type="InterPro" id="IPR036726">
    <property type="entry name" value="GTP1_OBG_dom_sf"/>
</dbReference>
<dbReference type="InterPro" id="IPR045086">
    <property type="entry name" value="OBG_GTPase"/>
</dbReference>
<dbReference type="InterPro" id="IPR015349">
    <property type="entry name" value="OCT_dom"/>
</dbReference>
<dbReference type="InterPro" id="IPR027417">
    <property type="entry name" value="P-loop_NTPase"/>
</dbReference>
<dbReference type="NCBIfam" id="TIGR02729">
    <property type="entry name" value="Obg_CgtA"/>
    <property type="match status" value="1"/>
</dbReference>
<dbReference type="NCBIfam" id="TIGR03595">
    <property type="entry name" value="Obg_CgtA_exten"/>
    <property type="match status" value="1"/>
</dbReference>
<dbReference type="NCBIfam" id="NF008954">
    <property type="entry name" value="PRK12296.1"/>
    <property type="match status" value="1"/>
</dbReference>
<dbReference type="NCBIfam" id="NF008955">
    <property type="entry name" value="PRK12297.1"/>
    <property type="match status" value="1"/>
</dbReference>
<dbReference type="NCBIfam" id="NF008956">
    <property type="entry name" value="PRK12299.1"/>
    <property type="match status" value="1"/>
</dbReference>
<dbReference type="PANTHER" id="PTHR11702">
    <property type="entry name" value="DEVELOPMENTALLY REGULATED GTP-BINDING PROTEIN-RELATED"/>
    <property type="match status" value="1"/>
</dbReference>
<dbReference type="PANTHER" id="PTHR11702:SF31">
    <property type="entry name" value="MITOCHONDRIAL RIBOSOME-ASSOCIATED GTPASE 2"/>
    <property type="match status" value="1"/>
</dbReference>
<dbReference type="Pfam" id="PF09269">
    <property type="entry name" value="DUF1967"/>
    <property type="match status" value="1"/>
</dbReference>
<dbReference type="Pfam" id="PF01018">
    <property type="entry name" value="GTP1_OBG"/>
    <property type="match status" value="1"/>
</dbReference>
<dbReference type="Pfam" id="PF01926">
    <property type="entry name" value="MMR_HSR1"/>
    <property type="match status" value="1"/>
</dbReference>
<dbReference type="PIRSF" id="PIRSF002401">
    <property type="entry name" value="GTP_bd_Obg/CgtA"/>
    <property type="match status" value="1"/>
</dbReference>
<dbReference type="PRINTS" id="PR00326">
    <property type="entry name" value="GTP1OBG"/>
</dbReference>
<dbReference type="SUPFAM" id="SSF102741">
    <property type="entry name" value="Obg GTP-binding protein C-terminal domain"/>
    <property type="match status" value="1"/>
</dbReference>
<dbReference type="SUPFAM" id="SSF82051">
    <property type="entry name" value="Obg GTP-binding protein N-terminal domain"/>
    <property type="match status" value="1"/>
</dbReference>
<dbReference type="SUPFAM" id="SSF52540">
    <property type="entry name" value="P-loop containing nucleoside triphosphate hydrolases"/>
    <property type="match status" value="1"/>
</dbReference>
<dbReference type="PROSITE" id="PS51710">
    <property type="entry name" value="G_OBG"/>
    <property type="match status" value="1"/>
</dbReference>
<dbReference type="PROSITE" id="PS00905">
    <property type="entry name" value="GTP1_OBG"/>
    <property type="match status" value="1"/>
</dbReference>
<dbReference type="PROSITE" id="PS51883">
    <property type="entry name" value="OBG"/>
    <property type="match status" value="1"/>
</dbReference>
<dbReference type="PROSITE" id="PS51881">
    <property type="entry name" value="OCT"/>
    <property type="match status" value="1"/>
</dbReference>
<name>OBG_LACP3</name>